<dbReference type="EMBL" id="CP000886">
    <property type="protein sequence ID" value="ABX66860.1"/>
    <property type="molecule type" value="Genomic_DNA"/>
</dbReference>
<dbReference type="RefSeq" id="WP_000804703.1">
    <property type="nucleotide sequence ID" value="NC_010102.1"/>
</dbReference>
<dbReference type="SMR" id="A9MW04"/>
<dbReference type="KEGG" id="spq:SPAB_01453"/>
<dbReference type="PATRIC" id="fig|1016998.12.peg.1372"/>
<dbReference type="HOGENOM" id="CLU_036856_0_1_6"/>
<dbReference type="BioCyc" id="SENT1016998:SPAB_RS05940-MONOMER"/>
<dbReference type="Proteomes" id="UP000008556">
    <property type="component" value="Chromosome"/>
</dbReference>
<dbReference type="GO" id="GO:0005737">
    <property type="term" value="C:cytoplasm"/>
    <property type="evidence" value="ECO:0007669"/>
    <property type="project" value="UniProtKB-SubCell"/>
</dbReference>
<dbReference type="GO" id="GO:0016149">
    <property type="term" value="F:translation release factor activity, codon specific"/>
    <property type="evidence" value="ECO:0007669"/>
    <property type="project" value="UniProtKB-UniRule"/>
</dbReference>
<dbReference type="FunFam" id="3.30.160.20:FF:000004">
    <property type="entry name" value="Peptide chain release factor 1"/>
    <property type="match status" value="1"/>
</dbReference>
<dbReference type="FunFam" id="3.30.70.1660:FF:000002">
    <property type="entry name" value="Peptide chain release factor 1"/>
    <property type="match status" value="1"/>
</dbReference>
<dbReference type="FunFam" id="3.30.70.1660:FF:000004">
    <property type="entry name" value="Peptide chain release factor 1"/>
    <property type="match status" value="1"/>
</dbReference>
<dbReference type="Gene3D" id="3.30.160.20">
    <property type="match status" value="1"/>
</dbReference>
<dbReference type="Gene3D" id="3.30.70.1660">
    <property type="match status" value="2"/>
</dbReference>
<dbReference type="Gene3D" id="6.10.140.1950">
    <property type="match status" value="1"/>
</dbReference>
<dbReference type="HAMAP" id="MF_00093">
    <property type="entry name" value="Rel_fac_1"/>
    <property type="match status" value="1"/>
</dbReference>
<dbReference type="InterPro" id="IPR005139">
    <property type="entry name" value="PCRF"/>
</dbReference>
<dbReference type="InterPro" id="IPR000352">
    <property type="entry name" value="Pep_chain_release_fac_I"/>
</dbReference>
<dbReference type="InterPro" id="IPR045853">
    <property type="entry name" value="Pep_chain_release_fac_I_sf"/>
</dbReference>
<dbReference type="InterPro" id="IPR050057">
    <property type="entry name" value="Prokaryotic/Mito_RF"/>
</dbReference>
<dbReference type="InterPro" id="IPR004373">
    <property type="entry name" value="RF-1"/>
</dbReference>
<dbReference type="NCBIfam" id="TIGR00019">
    <property type="entry name" value="prfA"/>
    <property type="match status" value="1"/>
</dbReference>
<dbReference type="NCBIfam" id="NF001859">
    <property type="entry name" value="PRK00591.1"/>
    <property type="match status" value="1"/>
</dbReference>
<dbReference type="PANTHER" id="PTHR43804">
    <property type="entry name" value="LD18447P"/>
    <property type="match status" value="1"/>
</dbReference>
<dbReference type="PANTHER" id="PTHR43804:SF7">
    <property type="entry name" value="LD18447P"/>
    <property type="match status" value="1"/>
</dbReference>
<dbReference type="Pfam" id="PF03462">
    <property type="entry name" value="PCRF"/>
    <property type="match status" value="1"/>
</dbReference>
<dbReference type="Pfam" id="PF00472">
    <property type="entry name" value="RF-1"/>
    <property type="match status" value="1"/>
</dbReference>
<dbReference type="SMART" id="SM00937">
    <property type="entry name" value="PCRF"/>
    <property type="match status" value="1"/>
</dbReference>
<dbReference type="SUPFAM" id="SSF75620">
    <property type="entry name" value="Release factor"/>
    <property type="match status" value="1"/>
</dbReference>
<dbReference type="PROSITE" id="PS00745">
    <property type="entry name" value="RF_PROK_I"/>
    <property type="match status" value="1"/>
</dbReference>
<organism>
    <name type="scientific">Salmonella paratyphi B (strain ATCC BAA-1250 / SPB7)</name>
    <dbReference type="NCBI Taxonomy" id="1016998"/>
    <lineage>
        <taxon>Bacteria</taxon>
        <taxon>Pseudomonadati</taxon>
        <taxon>Pseudomonadota</taxon>
        <taxon>Gammaproteobacteria</taxon>
        <taxon>Enterobacterales</taxon>
        <taxon>Enterobacteriaceae</taxon>
        <taxon>Salmonella</taxon>
    </lineage>
</organism>
<proteinExistence type="inferred from homology"/>
<sequence length="360" mass="40461">MKPSIVAKLEALHERHEEVQALLGDAGIIADQDRFRALSREYAQLSDVSRCFTDWQQVQDDIETAQMMLDDPEMREMAQEELREAKEKSEQLEQQLQVLLLPKDPDDERNAFLEVRAGTGGDEAALFAGDLFRMYSRYAEARRWRVEIMSMSEGEHGGYKEIIAKISGDGVYGRLKFESGGHRVQRVPATESQGRIHTSACTVAVMPELPEAELPDINPADLRIDTFRSSGAGGQHVNTTDSAIRITHLPTGIVVECQDERSQHKNKAKALSVLGARIHAAETAKRQQAEASTRRNLLGSGDRSDRNRTYNFPQGRVTDHRINLTLYRLDETMEGKLDMLIEPIVQEHQADLLAALSEQE</sequence>
<protein>
    <recommendedName>
        <fullName evidence="1">Peptide chain release factor 1</fullName>
        <shortName evidence="1">RF-1</shortName>
    </recommendedName>
</protein>
<evidence type="ECO:0000255" key="1">
    <source>
        <dbReference type="HAMAP-Rule" id="MF_00093"/>
    </source>
</evidence>
<evidence type="ECO:0000256" key="2">
    <source>
        <dbReference type="SAM" id="MobiDB-lite"/>
    </source>
</evidence>
<accession>A9MW04</accession>
<reference key="1">
    <citation type="submission" date="2007-11" db="EMBL/GenBank/DDBJ databases">
        <authorList>
            <consortium name="The Salmonella enterica serovar Paratyphi B Genome Sequencing Project"/>
            <person name="McClelland M."/>
            <person name="Sanderson E.K."/>
            <person name="Porwollik S."/>
            <person name="Spieth J."/>
            <person name="Clifton W.S."/>
            <person name="Fulton R."/>
            <person name="Cordes M."/>
            <person name="Wollam A."/>
            <person name="Shah N."/>
            <person name="Pepin K."/>
            <person name="Bhonagiri V."/>
            <person name="Nash W."/>
            <person name="Johnson M."/>
            <person name="Thiruvilangam P."/>
            <person name="Wilson R."/>
        </authorList>
    </citation>
    <scope>NUCLEOTIDE SEQUENCE [LARGE SCALE GENOMIC DNA]</scope>
    <source>
        <strain>ATCC BAA-1250 / SPB7</strain>
    </source>
</reference>
<keyword id="KW-0963">Cytoplasm</keyword>
<keyword id="KW-0488">Methylation</keyword>
<keyword id="KW-0648">Protein biosynthesis</keyword>
<comment type="function">
    <text evidence="1">Peptide chain release factor 1 directs the termination of translation in response to the peptide chain termination codons UAG and UAA.</text>
</comment>
<comment type="subcellular location">
    <subcellularLocation>
        <location evidence="1">Cytoplasm</location>
    </subcellularLocation>
</comment>
<comment type="PTM">
    <text evidence="1">Methylated by PrmC. Methylation increases the termination efficiency of RF1.</text>
</comment>
<comment type="similarity">
    <text evidence="1">Belongs to the prokaryotic/mitochondrial release factor family.</text>
</comment>
<feature type="chain" id="PRO_1000075513" description="Peptide chain release factor 1">
    <location>
        <begin position="1"/>
        <end position="360"/>
    </location>
</feature>
<feature type="region of interest" description="Disordered" evidence="2">
    <location>
        <begin position="284"/>
        <end position="313"/>
    </location>
</feature>
<feature type="modified residue" description="N5-methylglutamine" evidence="1">
    <location>
        <position position="235"/>
    </location>
</feature>
<gene>
    <name evidence="1" type="primary">prfA</name>
    <name type="ordered locus">SPAB_01453</name>
</gene>
<name>RF1_SALPB</name>